<accession>Q9AEU0</accession>
<keyword id="KW-1003">Cell membrane</keyword>
<keyword id="KW-0472">Membrane</keyword>
<keyword id="KW-0653">Protein transport</keyword>
<keyword id="KW-0811">Translocation</keyword>
<keyword id="KW-0812">Transmembrane</keyword>
<keyword id="KW-1133">Transmembrane helix</keyword>
<keyword id="KW-0813">Transport</keyword>
<dbReference type="EMBL" id="AY028381">
    <property type="protein sequence ID" value="AAK16997.1"/>
    <property type="molecule type" value="Genomic_DNA"/>
</dbReference>
<dbReference type="RefSeq" id="WP_061595683.1">
    <property type="nucleotide sequence ID" value="NZ_JAHZQA010000004.1"/>
</dbReference>
<dbReference type="SMR" id="Q9AEU0"/>
<dbReference type="TCDB" id="3.A.5.10.1">
    <property type="family name" value="the general secretory pathway (sec) family"/>
</dbReference>
<dbReference type="GO" id="GO:0005886">
    <property type="term" value="C:plasma membrane"/>
    <property type="evidence" value="ECO:0007669"/>
    <property type="project" value="UniProtKB-SubCell"/>
</dbReference>
<dbReference type="GO" id="GO:0065002">
    <property type="term" value="P:intracellular protein transmembrane transport"/>
    <property type="evidence" value="ECO:0007669"/>
    <property type="project" value="UniProtKB-UniRule"/>
</dbReference>
<dbReference type="GO" id="GO:0006605">
    <property type="term" value="P:protein targeting"/>
    <property type="evidence" value="ECO:0007669"/>
    <property type="project" value="UniProtKB-UniRule"/>
</dbReference>
<dbReference type="Gene3D" id="1.10.3370.10">
    <property type="entry name" value="SecY subunit domain"/>
    <property type="match status" value="1"/>
</dbReference>
<dbReference type="HAMAP" id="MF_01466">
    <property type="entry name" value="SecY2"/>
    <property type="match status" value="1"/>
</dbReference>
<dbReference type="InterPro" id="IPR002208">
    <property type="entry name" value="SecY/SEC61-alpha"/>
</dbReference>
<dbReference type="InterPro" id="IPR014269">
    <property type="entry name" value="SecY2"/>
</dbReference>
<dbReference type="InterPro" id="IPR023201">
    <property type="entry name" value="SecY_dom_sf"/>
</dbReference>
<dbReference type="NCBIfam" id="TIGR02920">
    <property type="entry name" value="acc_sec_Y2"/>
    <property type="match status" value="1"/>
</dbReference>
<dbReference type="NCBIfam" id="NF009082">
    <property type="entry name" value="PRK12417.1"/>
    <property type="match status" value="1"/>
</dbReference>
<dbReference type="PANTHER" id="PTHR10906">
    <property type="entry name" value="SECY/SEC61-ALPHA FAMILY MEMBER"/>
    <property type="match status" value="1"/>
</dbReference>
<dbReference type="Pfam" id="PF00344">
    <property type="entry name" value="SecY"/>
    <property type="match status" value="1"/>
</dbReference>
<dbReference type="PIRSF" id="PIRSF004557">
    <property type="entry name" value="SecY"/>
    <property type="match status" value="1"/>
</dbReference>
<dbReference type="PRINTS" id="PR00303">
    <property type="entry name" value="SECYTRNLCASE"/>
</dbReference>
<dbReference type="SUPFAM" id="SSF103491">
    <property type="entry name" value="Preprotein translocase SecY subunit"/>
    <property type="match status" value="1"/>
</dbReference>
<comment type="function">
    <text evidence="2 3">The central subunit of a protein translocation channel (Potential). Part of the accessory SecA2/SecY2 system specifically required to export GspB, a serine-rich repeat cell wall protein encoded upstream in the same operon.</text>
</comment>
<comment type="subunit">
    <text evidence="3">May form heterotrimers with SecE and SecG subunits (Potential). Component of the accessory SecA2/SecY2 protein translocase complex required to export cell wall protein GspB.</text>
</comment>
<comment type="subcellular location">
    <subcellularLocation>
        <location evidence="1">Cell membrane</location>
        <topology evidence="1">Multi-pass membrane protein</topology>
    </subcellularLocation>
</comment>
<comment type="disruption phenotype">
    <text evidence="2">Loss of adherence to human platelet cells, loss of export of cell wall protein GspB; GspB accumulates in the cytoplasm.</text>
</comment>
<comment type="similarity">
    <text evidence="1">Belongs to the SecY/SEC61-alpha family. SecY2 subfamily.</text>
</comment>
<feature type="chain" id="PRO_0000414208" description="Accessory Sec system protein translocase subunit SecY2">
    <location>
        <begin position="1"/>
        <end position="407"/>
    </location>
</feature>
<feature type="transmembrane region" description="Helical" evidence="1">
    <location>
        <begin position="13"/>
        <end position="33"/>
    </location>
</feature>
<feature type="transmembrane region" description="Helical" evidence="1">
    <location>
        <begin position="65"/>
        <end position="85"/>
    </location>
</feature>
<feature type="transmembrane region" description="Helical" evidence="1">
    <location>
        <begin position="104"/>
        <end position="124"/>
    </location>
</feature>
<feature type="transmembrane region" description="Helical" evidence="1">
    <location>
        <begin position="133"/>
        <end position="153"/>
    </location>
</feature>
<feature type="transmembrane region" description="Helical" evidence="1">
    <location>
        <begin position="158"/>
        <end position="178"/>
    </location>
</feature>
<feature type="transmembrane region" description="Helical" evidence="1">
    <location>
        <begin position="192"/>
        <end position="212"/>
    </location>
</feature>
<feature type="transmembrane region" description="Helical" evidence="1">
    <location>
        <begin position="248"/>
        <end position="268"/>
    </location>
</feature>
<feature type="transmembrane region" description="Helical" evidence="1">
    <location>
        <begin position="287"/>
        <end position="307"/>
    </location>
</feature>
<feature type="transmembrane region" description="Helical" evidence="1">
    <location>
        <begin position="345"/>
        <end position="365"/>
    </location>
</feature>
<feature type="transmembrane region" description="Helical" evidence="1">
    <location>
        <begin position="370"/>
        <end position="390"/>
    </location>
</feature>
<gene>
    <name evidence="1" type="primary">secY2</name>
</gene>
<evidence type="ECO:0000255" key="1">
    <source>
        <dbReference type="HAMAP-Rule" id="MF_01466"/>
    </source>
</evidence>
<evidence type="ECO:0000269" key="2">
    <source>
    </source>
</evidence>
<evidence type="ECO:0000305" key="3"/>
<organism>
    <name type="scientific">Streptococcus gordonii</name>
    <dbReference type="NCBI Taxonomy" id="1302"/>
    <lineage>
        <taxon>Bacteria</taxon>
        <taxon>Bacillati</taxon>
        <taxon>Bacillota</taxon>
        <taxon>Bacilli</taxon>
        <taxon>Lactobacillales</taxon>
        <taxon>Streptococcaceae</taxon>
        <taxon>Streptococcus</taxon>
    </lineage>
</organism>
<sequence>MKSFFKPLILKKFLWTLLFVFIYVLGSKLTLPFVDVSSIAKLNGDSVTLNYAAALMGGNLRSMSFFSIGLAPWMSSILIWQMFTVSKRLGLNKLSMESQEKRRMLLTLAIALIQSLGLVLNLPLKTVAGVGQGTIVFLDTLILIAGTYFLIWLTDLNSSMGLGGSIMIVMVSMISYIPQDIWLSIQELKISPLILALIGFFSLCFLYLAVLVERAKYRIPINKINIHNRFKKYSYLDIRVNAAGGLPIMYAMTLVSIPQYFLMLLLFFQPNNRLLKEGILSLAMGGIPWFILYLLTIFILAWAFAFINVNSDQIAERMQRSGEYIENLYPGEATRRYIHKTVGYFAFVGALYLVLVAGLPMLLIFLDIRYMRLGMIPGMFMIFIGMVFSIKDEVDTLTLNDRYHSLF</sequence>
<protein>
    <recommendedName>
        <fullName evidence="1">Accessory Sec system protein translocase subunit SecY2</fullName>
    </recommendedName>
</protein>
<proteinExistence type="inferred from homology"/>
<name>SECY2_STRGN</name>
<reference key="1">
    <citation type="journal article" date="2002" name="Mol. Microbiol.">
        <title>An accessory sec locus of Streptococcus gordonii is required for export of the surface protein GspB and for normal levels of binding to human platelets.</title>
        <authorList>
            <person name="Bensing B.A."/>
            <person name="Sullam P.M."/>
        </authorList>
    </citation>
    <scope>NUCLEOTIDE SEQUENCE [GENOMIC DNA]</scope>
    <scope>FUNCTION</scope>
    <scope>DISRUPTION PHENOTYPE</scope>
    <source>
        <strain>M99</strain>
    </source>
</reference>
<reference key="2">
    <citation type="journal article" date="2005" name="J. Bacteriol.">
        <title>Two additional components of the accessory sec system mediating export of the Streptococcus gordonii platelet-binding protein GspB.</title>
        <authorList>
            <person name="Takamatsu D."/>
            <person name="Bensing B.A."/>
            <person name="Sullam P.M."/>
        </authorList>
    </citation>
    <scope>NUCLEOTIDE SEQUENCE [GENOMIC DNA]</scope>
    <source>
        <strain>M99</strain>
    </source>
</reference>